<proteinExistence type="inferred from homology"/>
<protein>
    <recommendedName>
        <fullName>Mitochondrial intermediate peptidase</fullName>
        <shortName>MIP</shortName>
        <ecNumber>3.4.24.59</ecNumber>
    </recommendedName>
    <alternativeName>
        <fullName>Octapeptidyl aminopeptidase</fullName>
    </alternativeName>
</protein>
<gene>
    <name type="primary">OCT1</name>
    <name type="ordered locus">AFR198W</name>
</gene>
<accession>Q753X4</accession>
<keyword id="KW-0378">Hydrolase</keyword>
<keyword id="KW-0479">Metal-binding</keyword>
<keyword id="KW-0482">Metalloprotease</keyword>
<keyword id="KW-0496">Mitochondrion</keyword>
<keyword id="KW-0645">Protease</keyword>
<keyword id="KW-1185">Reference proteome</keyword>
<keyword id="KW-0809">Transit peptide</keyword>
<keyword id="KW-0862">Zinc</keyword>
<reference key="1">
    <citation type="journal article" date="2004" name="Science">
        <title>The Ashbya gossypii genome as a tool for mapping the ancient Saccharomyces cerevisiae genome.</title>
        <authorList>
            <person name="Dietrich F.S."/>
            <person name="Voegeli S."/>
            <person name="Brachat S."/>
            <person name="Lerch A."/>
            <person name="Gates K."/>
            <person name="Steiner S."/>
            <person name="Mohr C."/>
            <person name="Poehlmann R."/>
            <person name="Luedi P."/>
            <person name="Choi S."/>
            <person name="Wing R.A."/>
            <person name="Flavier A."/>
            <person name="Gaffney T.D."/>
            <person name="Philippsen P."/>
        </authorList>
    </citation>
    <scope>NUCLEOTIDE SEQUENCE [LARGE SCALE GENOMIC DNA]</scope>
    <source>
        <strain>ATCC 10895 / CBS 109.51 / FGSC 9923 / NRRL Y-1056</strain>
    </source>
</reference>
<reference key="2">
    <citation type="journal article" date="2013" name="G3 (Bethesda)">
        <title>Genomes of Ashbya fungi isolated from insects reveal four mating-type loci, numerous translocations, lack of transposons, and distinct gene duplications.</title>
        <authorList>
            <person name="Dietrich F.S."/>
            <person name="Voegeli S."/>
            <person name="Kuo S."/>
            <person name="Philippsen P."/>
        </authorList>
    </citation>
    <scope>GENOME REANNOTATION</scope>
    <source>
        <strain>ATCC 10895 / CBS 109.51 / FGSC 9923 / NRRL Y-1056</strain>
    </source>
</reference>
<feature type="transit peptide" description="Mitochondrion" evidence="2">
    <location>
        <begin position="1"/>
        <end position="28"/>
    </location>
</feature>
<feature type="chain" id="PRO_0000338568" description="Mitochondrial intermediate peptidase">
    <location>
        <begin position="29"/>
        <end position="776"/>
    </location>
</feature>
<feature type="region of interest" description="Disordered" evidence="4">
    <location>
        <begin position="48"/>
        <end position="71"/>
    </location>
</feature>
<feature type="compositionally biased region" description="Polar residues" evidence="4">
    <location>
        <begin position="53"/>
        <end position="71"/>
    </location>
</feature>
<feature type="active site" evidence="3">
    <location>
        <position position="568"/>
    </location>
</feature>
<feature type="binding site" evidence="3">
    <location>
        <position position="567"/>
    </location>
    <ligand>
        <name>Zn(2+)</name>
        <dbReference type="ChEBI" id="CHEBI:29105"/>
        <note>catalytic</note>
    </ligand>
</feature>
<feature type="binding site" evidence="3">
    <location>
        <position position="571"/>
    </location>
    <ligand>
        <name>Zn(2+)</name>
        <dbReference type="ChEBI" id="CHEBI:29105"/>
        <note>catalytic</note>
    </ligand>
</feature>
<feature type="binding site" evidence="3">
    <location>
        <position position="574"/>
    </location>
    <ligand>
        <name>Zn(2+)</name>
        <dbReference type="ChEBI" id="CHEBI:29105"/>
        <note>catalytic</note>
    </ligand>
</feature>
<evidence type="ECO:0000250" key="1"/>
<evidence type="ECO:0000255" key="2"/>
<evidence type="ECO:0000255" key="3">
    <source>
        <dbReference type="PROSITE-ProRule" id="PRU10095"/>
    </source>
</evidence>
<evidence type="ECO:0000256" key="4">
    <source>
        <dbReference type="SAM" id="MobiDB-lite"/>
    </source>
</evidence>
<evidence type="ECO:0000305" key="5"/>
<comment type="function">
    <text evidence="1">Cleaves proteins, imported into the mitochondrion, to their mature size. While most mitochondrial precursor proteins are processed to the mature form in one step by mitochondrial processing peptidase (MPP), the sequential cleavage by MIP of an octapeptide after initial processing by MPP is a required step for a subgroup of nuclear-encoded precursor proteins destined for the matrix or the inner membrane (By similarity).</text>
</comment>
<comment type="catalytic activity">
    <reaction>
        <text>Release of an N-terminal octapeptide as second stage of processing of some proteins imported into the mitochondrion.</text>
        <dbReference type="EC" id="3.4.24.59"/>
    </reaction>
</comment>
<comment type="cofactor">
    <cofactor evidence="1">
        <name>Zn(2+)</name>
        <dbReference type="ChEBI" id="CHEBI:29105"/>
    </cofactor>
    <text evidence="1">Binds 1 zinc ion.</text>
</comment>
<comment type="subcellular location">
    <subcellularLocation>
        <location evidence="1">Mitochondrion matrix</location>
    </subcellularLocation>
</comment>
<comment type="similarity">
    <text evidence="5">Belongs to the peptidase M3 family.</text>
</comment>
<organism>
    <name type="scientific">Eremothecium gossypii (strain ATCC 10895 / CBS 109.51 / FGSC 9923 / NRRL Y-1056)</name>
    <name type="common">Yeast</name>
    <name type="synonym">Ashbya gossypii</name>
    <dbReference type="NCBI Taxonomy" id="284811"/>
    <lineage>
        <taxon>Eukaryota</taxon>
        <taxon>Fungi</taxon>
        <taxon>Dikarya</taxon>
        <taxon>Ascomycota</taxon>
        <taxon>Saccharomycotina</taxon>
        <taxon>Saccharomycetes</taxon>
        <taxon>Saccharomycetales</taxon>
        <taxon>Saccharomycetaceae</taxon>
        <taxon>Eremothecium</taxon>
    </lineage>
</organism>
<dbReference type="EC" id="3.4.24.59"/>
<dbReference type="EMBL" id="AE016819">
    <property type="protein sequence ID" value="AAS53569.1"/>
    <property type="molecule type" value="Genomic_DNA"/>
</dbReference>
<dbReference type="RefSeq" id="NP_985745.1">
    <property type="nucleotide sequence ID" value="NM_211099.1"/>
</dbReference>
<dbReference type="SMR" id="Q753X4"/>
<dbReference type="FunCoup" id="Q753X4">
    <property type="interactions" value="660"/>
</dbReference>
<dbReference type="STRING" id="284811.Q753X4"/>
<dbReference type="MEROPS" id="M03.006"/>
<dbReference type="EnsemblFungi" id="AAS53569">
    <property type="protein sequence ID" value="AAS53569"/>
    <property type="gene ID" value="AGOS_AFR198W"/>
</dbReference>
<dbReference type="GeneID" id="4622005"/>
<dbReference type="KEGG" id="ago:AGOS_AFR198W"/>
<dbReference type="eggNOG" id="KOG2090">
    <property type="taxonomic scope" value="Eukaryota"/>
</dbReference>
<dbReference type="HOGENOM" id="CLU_001805_0_0_1"/>
<dbReference type="InParanoid" id="Q753X4"/>
<dbReference type="OMA" id="ALMFEYM"/>
<dbReference type="OrthoDB" id="17530at2759"/>
<dbReference type="Proteomes" id="UP000000591">
    <property type="component" value="Chromosome VI"/>
</dbReference>
<dbReference type="GO" id="GO:0005759">
    <property type="term" value="C:mitochondrial matrix"/>
    <property type="evidence" value="ECO:0007669"/>
    <property type="project" value="UniProtKB-SubCell"/>
</dbReference>
<dbReference type="GO" id="GO:0005739">
    <property type="term" value="C:mitochondrion"/>
    <property type="evidence" value="ECO:0000318"/>
    <property type="project" value="GO_Central"/>
</dbReference>
<dbReference type="GO" id="GO:0046872">
    <property type="term" value="F:metal ion binding"/>
    <property type="evidence" value="ECO:0007669"/>
    <property type="project" value="UniProtKB-KW"/>
</dbReference>
<dbReference type="GO" id="GO:0004222">
    <property type="term" value="F:metalloendopeptidase activity"/>
    <property type="evidence" value="ECO:0000318"/>
    <property type="project" value="GO_Central"/>
</dbReference>
<dbReference type="GO" id="GO:0006518">
    <property type="term" value="P:peptide metabolic process"/>
    <property type="evidence" value="ECO:0000318"/>
    <property type="project" value="GO_Central"/>
</dbReference>
<dbReference type="GO" id="GO:0006627">
    <property type="term" value="P:protein processing involved in protein targeting to mitochondrion"/>
    <property type="evidence" value="ECO:0000318"/>
    <property type="project" value="GO_Central"/>
</dbReference>
<dbReference type="CDD" id="cd06457">
    <property type="entry name" value="M3A_MIP"/>
    <property type="match status" value="1"/>
</dbReference>
<dbReference type="FunFam" id="3.40.390.10:FF:000055">
    <property type="entry name" value="Related to mitochondrial intermediate peptidase"/>
    <property type="match status" value="1"/>
</dbReference>
<dbReference type="Gene3D" id="3.40.390.10">
    <property type="entry name" value="Collagenase (Catalytic Domain)"/>
    <property type="match status" value="1"/>
</dbReference>
<dbReference type="Gene3D" id="1.10.1370.10">
    <property type="entry name" value="Neurolysin, domain 3"/>
    <property type="match status" value="1"/>
</dbReference>
<dbReference type="InterPro" id="IPR033851">
    <property type="entry name" value="M3A_MIP"/>
</dbReference>
<dbReference type="InterPro" id="IPR024079">
    <property type="entry name" value="MetalloPept_cat_dom_sf"/>
</dbReference>
<dbReference type="InterPro" id="IPR024077">
    <property type="entry name" value="Neurolysin/TOP_dom2"/>
</dbReference>
<dbReference type="InterPro" id="IPR045090">
    <property type="entry name" value="Pept_M3A_M3B"/>
</dbReference>
<dbReference type="InterPro" id="IPR001567">
    <property type="entry name" value="Pept_M3A_M3B_dom"/>
</dbReference>
<dbReference type="PANTHER" id="PTHR11804:SF79">
    <property type="entry name" value="MITOCHONDRIAL INTERMEDIATE PEPTIDASE"/>
    <property type="match status" value="1"/>
</dbReference>
<dbReference type="PANTHER" id="PTHR11804">
    <property type="entry name" value="PROTEASE M3 THIMET OLIGOPEPTIDASE-RELATED"/>
    <property type="match status" value="1"/>
</dbReference>
<dbReference type="Pfam" id="PF01432">
    <property type="entry name" value="Peptidase_M3"/>
    <property type="match status" value="1"/>
</dbReference>
<dbReference type="SUPFAM" id="SSF55486">
    <property type="entry name" value="Metalloproteases ('zincins'), catalytic domain"/>
    <property type="match status" value="1"/>
</dbReference>
<dbReference type="PROSITE" id="PS00142">
    <property type="entry name" value="ZINC_PROTEASE"/>
    <property type="match status" value="1"/>
</dbReference>
<name>PMIP_EREGS</name>
<sequence length="776" mass="88597">MFVRFYKRLDRQYIQSQRRWILSSNKCLLQGNKNATISPLRRAFDDQDHWEESQAQNTSSEQDNKGKNSSYFWSRSKATAPQVAHTGLFQNPYLNSPEGLRKFANKSLTEATALVRNLREDSSQEGLVRYIIRLDQLSDILCRVIDLCEFLRAAHPDEQFVAAAQECHEQMFEIMNILNTDVVLCKRLKQVLSDENISSKLSSEEIRVGHILLEDFEKAGAYASPEVRKQFIQLSQNISIIGQDFINNTESLSSSYIKIPCKDLESSGTSHLVLRQLTKDTMGNNYKIPTSGYAPYTLLNACPSEAIRRQVWTAMFSCSEKQVKRLKSLLQLRRKLANIMGATDYVSYQLEGKMAKSPENVKNFLNTLVDHTKPLAAGELEELAKLKRNVENLSETNTLKLMRPWDRDYYSSLSPNFTRPNHRVDGFTSINTYFSLGVVMQGISDLFRDIYGISLKPVVAQAGETWAPDVRKLQVISETEGIIGLIYCDLLERPGKTTSPSHFTVCCSRQIYPEENDFSTIQVGENPDGSRFQMPVISLICNFRATRHGKNKSLCLLELSDVETLFHEMGHALHSMLGRTQLQNLSGTRCVTDFVELPSILMEHFAKDRRVLLRISSNYATGEPIPEELLSAFQEQNNFLKNTETFSQIKMSMLDQRLHSITDQDDIIAVYHGLEREMEVLVDDQTNWCGRFGHLFGYGASYYSYLMDRAIAAKIWDHLFKKDPFSRSSGEKFKEGVLKWGGSRDAWQCIADALDEPRLVKGDDWAMRFIGEVEDM</sequence>